<evidence type="ECO:0000255" key="1">
    <source>
        <dbReference type="HAMAP-Rule" id="MF_00444"/>
    </source>
</evidence>
<name>CLPP2_TROWT</name>
<dbReference type="EC" id="3.4.21.92" evidence="1"/>
<dbReference type="EMBL" id="AE014184">
    <property type="protein sequence ID" value="AAO44578.1"/>
    <property type="molecule type" value="Genomic_DNA"/>
</dbReference>
<dbReference type="RefSeq" id="WP_011096237.1">
    <property type="nucleotide sequence ID" value="NC_004572.3"/>
</dbReference>
<dbReference type="SMR" id="Q83G48"/>
<dbReference type="STRING" id="203267.TWT_481"/>
<dbReference type="MEROPS" id="S14.008"/>
<dbReference type="KEGG" id="twh:TWT_481"/>
<dbReference type="eggNOG" id="COG0740">
    <property type="taxonomic scope" value="Bacteria"/>
</dbReference>
<dbReference type="HOGENOM" id="CLU_058707_4_1_11"/>
<dbReference type="OrthoDB" id="9802800at2"/>
<dbReference type="Proteomes" id="UP000002200">
    <property type="component" value="Chromosome"/>
</dbReference>
<dbReference type="GO" id="GO:0005737">
    <property type="term" value="C:cytoplasm"/>
    <property type="evidence" value="ECO:0007669"/>
    <property type="project" value="UniProtKB-SubCell"/>
</dbReference>
<dbReference type="GO" id="GO:0009368">
    <property type="term" value="C:endopeptidase Clp complex"/>
    <property type="evidence" value="ECO:0007669"/>
    <property type="project" value="TreeGrafter"/>
</dbReference>
<dbReference type="GO" id="GO:0004176">
    <property type="term" value="F:ATP-dependent peptidase activity"/>
    <property type="evidence" value="ECO:0007669"/>
    <property type="project" value="InterPro"/>
</dbReference>
<dbReference type="GO" id="GO:0051117">
    <property type="term" value="F:ATPase binding"/>
    <property type="evidence" value="ECO:0007669"/>
    <property type="project" value="TreeGrafter"/>
</dbReference>
<dbReference type="GO" id="GO:0004252">
    <property type="term" value="F:serine-type endopeptidase activity"/>
    <property type="evidence" value="ECO:0007669"/>
    <property type="project" value="UniProtKB-UniRule"/>
</dbReference>
<dbReference type="GO" id="GO:0006515">
    <property type="term" value="P:protein quality control for misfolded or incompletely synthesized proteins"/>
    <property type="evidence" value="ECO:0007669"/>
    <property type="project" value="TreeGrafter"/>
</dbReference>
<dbReference type="CDD" id="cd07017">
    <property type="entry name" value="S14_ClpP_2"/>
    <property type="match status" value="1"/>
</dbReference>
<dbReference type="FunFam" id="3.90.226.10:FF:000002">
    <property type="entry name" value="ATP-dependent Clp protease proteolytic subunit"/>
    <property type="match status" value="1"/>
</dbReference>
<dbReference type="Gene3D" id="3.90.226.10">
    <property type="entry name" value="2-enoyl-CoA Hydratase, Chain A, domain 1"/>
    <property type="match status" value="1"/>
</dbReference>
<dbReference type="HAMAP" id="MF_00444">
    <property type="entry name" value="ClpP"/>
    <property type="match status" value="1"/>
</dbReference>
<dbReference type="InterPro" id="IPR001907">
    <property type="entry name" value="ClpP"/>
</dbReference>
<dbReference type="InterPro" id="IPR029045">
    <property type="entry name" value="ClpP/crotonase-like_dom_sf"/>
</dbReference>
<dbReference type="InterPro" id="IPR023562">
    <property type="entry name" value="ClpP/TepA"/>
</dbReference>
<dbReference type="InterPro" id="IPR033135">
    <property type="entry name" value="ClpP_His_AS"/>
</dbReference>
<dbReference type="NCBIfam" id="NF001368">
    <property type="entry name" value="PRK00277.1"/>
    <property type="match status" value="1"/>
</dbReference>
<dbReference type="NCBIfam" id="NF009205">
    <property type="entry name" value="PRK12553.1"/>
    <property type="match status" value="1"/>
</dbReference>
<dbReference type="PANTHER" id="PTHR10381">
    <property type="entry name" value="ATP-DEPENDENT CLP PROTEASE PROTEOLYTIC SUBUNIT"/>
    <property type="match status" value="1"/>
</dbReference>
<dbReference type="PANTHER" id="PTHR10381:SF70">
    <property type="entry name" value="ATP-DEPENDENT CLP PROTEASE PROTEOLYTIC SUBUNIT"/>
    <property type="match status" value="1"/>
</dbReference>
<dbReference type="Pfam" id="PF00574">
    <property type="entry name" value="CLP_protease"/>
    <property type="match status" value="1"/>
</dbReference>
<dbReference type="PRINTS" id="PR00127">
    <property type="entry name" value="CLPPROTEASEP"/>
</dbReference>
<dbReference type="SUPFAM" id="SSF52096">
    <property type="entry name" value="ClpP/crotonase"/>
    <property type="match status" value="1"/>
</dbReference>
<dbReference type="PROSITE" id="PS00382">
    <property type="entry name" value="CLP_PROTEASE_HIS"/>
    <property type="match status" value="1"/>
</dbReference>
<accession>Q83G48</accession>
<keyword id="KW-0963">Cytoplasm</keyword>
<keyword id="KW-0378">Hydrolase</keyword>
<keyword id="KW-0645">Protease</keyword>
<keyword id="KW-1185">Reference proteome</keyword>
<keyword id="KW-0720">Serine protease</keyword>
<protein>
    <recommendedName>
        <fullName evidence="1">ATP-dependent Clp protease proteolytic subunit 2</fullName>
        <ecNumber evidence="1">3.4.21.92</ecNumber>
    </recommendedName>
    <alternativeName>
        <fullName evidence="1">Endopeptidase Clp 2</fullName>
    </alternativeName>
</protein>
<proteinExistence type="inferred from homology"/>
<comment type="function">
    <text evidence="1">Cleaves peptides in various proteins in a process that requires ATP hydrolysis. Has a chymotrypsin-like activity. Plays a major role in the degradation of misfolded proteins.</text>
</comment>
<comment type="catalytic activity">
    <reaction evidence="1">
        <text>Hydrolysis of proteins to small peptides in the presence of ATP and magnesium. alpha-casein is the usual test substrate. In the absence of ATP, only oligopeptides shorter than five residues are hydrolyzed (such as succinyl-Leu-Tyr-|-NHMec, and Leu-Tyr-Leu-|-Tyr-Trp, in which cleavage of the -Tyr-|-Leu- and -Tyr-|-Trp bonds also occurs).</text>
        <dbReference type="EC" id="3.4.21.92"/>
    </reaction>
</comment>
<comment type="subunit">
    <text evidence="1">Fourteen ClpP subunits assemble into 2 heptameric rings which stack back to back to give a disk-like structure with a central cavity, resembling the structure of eukaryotic proteasomes.</text>
</comment>
<comment type="subcellular location">
    <subcellularLocation>
        <location evidence="1">Cytoplasm</location>
    </subcellularLocation>
</comment>
<comment type="similarity">
    <text evidence="1">Belongs to the peptidase S14 family.</text>
</comment>
<gene>
    <name evidence="1" type="primary">clpP2</name>
    <name type="ordered locus">TWT_481</name>
</gene>
<organism>
    <name type="scientific">Tropheryma whipplei (strain Twist)</name>
    <name type="common">Whipple's bacillus</name>
    <dbReference type="NCBI Taxonomy" id="203267"/>
    <lineage>
        <taxon>Bacteria</taxon>
        <taxon>Bacillati</taxon>
        <taxon>Actinomycetota</taxon>
        <taxon>Actinomycetes</taxon>
        <taxon>Micrococcales</taxon>
        <taxon>Tropherymataceae</taxon>
        <taxon>Tropheryma</taxon>
    </lineage>
</organism>
<reference key="1">
    <citation type="journal article" date="2003" name="Genome Res.">
        <title>Tropheryma whipplei twist: a human pathogenic Actinobacteria with a reduced genome.</title>
        <authorList>
            <person name="Raoult D."/>
            <person name="Ogata H."/>
            <person name="Audic S."/>
            <person name="Robert C."/>
            <person name="Suhre K."/>
            <person name="Drancourt M."/>
            <person name="Claverie J.-M."/>
        </authorList>
    </citation>
    <scope>NUCLEOTIDE SEQUENCE [LARGE SCALE GENOMIC DNA]</scope>
    <source>
        <strain>Twist</strain>
    </source>
</reference>
<feature type="chain" id="PRO_0000179709" description="ATP-dependent Clp protease proteolytic subunit 2">
    <location>
        <begin position="1"/>
        <end position="180"/>
    </location>
</feature>
<feature type="active site" description="Nucleophile" evidence="1">
    <location>
        <position position="86"/>
    </location>
</feature>
<feature type="active site" evidence="1">
    <location>
        <position position="111"/>
    </location>
</feature>
<sequence>MSETKQTVFDRLLQERIVWLGEAIDDKLANEICAKILLLNADDPKEDIFLYINSPGGSITAGMAIYDTMQFVSNDIVTVGIGMAASMGQVLLTSGTQNKRYIMPNARVLLHQPLAGFGGTASDIQTQAKLILDMKYRLSQITASRTGKTVEQIMEDGDRDHWFTAEEALEYGFVDHIRTE</sequence>